<comment type="function">
    <text evidence="1">Lyase that catalyzes the C1-decarboxylation of 4-hydroxy-3-methoxy-5-(all-trans-polyprenyl)benzoic acid into 2-methoxy-6-(all-trans-polyprenyl)phenol during ubiquinone biosynthesis.</text>
</comment>
<comment type="catalytic activity">
    <reaction evidence="1">
        <text>a 4-hydroxy-3-methoxy-5-(all-trans-polyprenyl)benzoate + H(+) = a 2-methoxy-6-(all-trans-polyprenyl)phenol + CO2</text>
        <dbReference type="Rhea" id="RHEA:81179"/>
        <dbReference type="Rhea" id="RHEA-COMP:9551"/>
        <dbReference type="Rhea" id="RHEA-COMP:10931"/>
        <dbReference type="ChEBI" id="CHEBI:15378"/>
        <dbReference type="ChEBI" id="CHEBI:16526"/>
        <dbReference type="ChEBI" id="CHEBI:62731"/>
        <dbReference type="ChEBI" id="CHEBI:84443"/>
        <dbReference type="EC" id="4.1.1.130"/>
    </reaction>
</comment>
<comment type="cofactor">
    <cofactor evidence="1">
        <name>Zn(2+)</name>
        <dbReference type="ChEBI" id="CHEBI:29105"/>
    </cofactor>
</comment>
<comment type="pathway">
    <text evidence="1">Cofactor biosynthesis; ubiquinone biosynthesis.</text>
</comment>
<comment type="subunit">
    <text evidence="1">Component of a multi-subunit COQ enzyme complex, composed of at least COQ3, COQ4, COQ5, COQ6, COQ7 and COQ9.</text>
</comment>
<comment type="subcellular location">
    <subcellularLocation>
        <location evidence="1">Mitochondrion inner membrane</location>
        <topology evidence="1">Peripheral membrane protein</topology>
        <orientation evidence="1">Matrix side</orientation>
    </subcellularLocation>
</comment>
<comment type="similarity">
    <text evidence="1">Belongs to the COQ4 family.</text>
</comment>
<feature type="transit peptide" description="Mitochondrion" evidence="1">
    <location>
        <begin position="1"/>
        <end position="16"/>
    </location>
</feature>
<feature type="chain" id="PRO_0000388142" description="Ubiquinone biosynthesis protein COQ4, mitochondrial">
    <location>
        <begin position="17"/>
        <end position="341"/>
    </location>
</feature>
<feature type="binding site" evidence="1">
    <location>
        <position position="220"/>
    </location>
    <ligand>
        <name>Zn(2+)</name>
        <dbReference type="ChEBI" id="CHEBI:29105"/>
    </ligand>
</feature>
<feature type="binding site" evidence="1">
    <location>
        <position position="221"/>
    </location>
    <ligand>
        <name>Zn(2+)</name>
        <dbReference type="ChEBI" id="CHEBI:29105"/>
    </ligand>
</feature>
<feature type="binding site" evidence="1">
    <location>
        <position position="224"/>
    </location>
    <ligand>
        <name>Zn(2+)</name>
        <dbReference type="ChEBI" id="CHEBI:29105"/>
    </ligand>
</feature>
<feature type="binding site" evidence="1">
    <location>
        <position position="236"/>
    </location>
    <ligand>
        <name>Zn(2+)</name>
        <dbReference type="ChEBI" id="CHEBI:29105"/>
    </ligand>
</feature>
<dbReference type="EC" id="4.1.1.130" evidence="1"/>
<dbReference type="EMBL" id="DS480422">
    <property type="protein sequence ID" value="EDO16577.1"/>
    <property type="molecule type" value="Genomic_DNA"/>
</dbReference>
<dbReference type="RefSeq" id="XP_001644435.1">
    <property type="nucleotide sequence ID" value="XM_001644385.1"/>
</dbReference>
<dbReference type="SMR" id="A7TMI3"/>
<dbReference type="FunCoup" id="A7TMI3">
    <property type="interactions" value="555"/>
</dbReference>
<dbReference type="STRING" id="436907.A7TMI3"/>
<dbReference type="GeneID" id="5544737"/>
<dbReference type="KEGG" id="vpo:Kpol_1064p59"/>
<dbReference type="eggNOG" id="KOG3244">
    <property type="taxonomic scope" value="Eukaryota"/>
</dbReference>
<dbReference type="HOGENOM" id="CLU_061241_0_2_1"/>
<dbReference type="InParanoid" id="A7TMI3"/>
<dbReference type="OMA" id="YYERHFH"/>
<dbReference type="OrthoDB" id="4249at2759"/>
<dbReference type="PhylomeDB" id="A7TMI3"/>
<dbReference type="UniPathway" id="UPA00232"/>
<dbReference type="Proteomes" id="UP000000267">
    <property type="component" value="Unassembled WGS sequence"/>
</dbReference>
<dbReference type="GO" id="GO:0031314">
    <property type="term" value="C:extrinsic component of mitochondrial inner membrane"/>
    <property type="evidence" value="ECO:0007669"/>
    <property type="project" value="UniProtKB-UniRule"/>
</dbReference>
<dbReference type="GO" id="GO:0006744">
    <property type="term" value="P:ubiquinone biosynthetic process"/>
    <property type="evidence" value="ECO:0007669"/>
    <property type="project" value="UniProtKB-UniRule"/>
</dbReference>
<dbReference type="HAMAP" id="MF_03111">
    <property type="entry name" value="Coq4"/>
    <property type="match status" value="1"/>
</dbReference>
<dbReference type="InterPro" id="IPR007715">
    <property type="entry name" value="Coq4"/>
</dbReference>
<dbReference type="InterPro" id="IPR027540">
    <property type="entry name" value="Coq4_euk"/>
</dbReference>
<dbReference type="PANTHER" id="PTHR12922">
    <property type="entry name" value="UBIQUINONE BIOSYNTHESIS PROTEIN"/>
    <property type="match status" value="1"/>
</dbReference>
<dbReference type="PANTHER" id="PTHR12922:SF7">
    <property type="entry name" value="UBIQUINONE BIOSYNTHESIS PROTEIN COQ4 HOMOLOG, MITOCHONDRIAL"/>
    <property type="match status" value="1"/>
</dbReference>
<dbReference type="Pfam" id="PF05019">
    <property type="entry name" value="Coq4"/>
    <property type="match status" value="1"/>
</dbReference>
<sequence length="341" mass="39300">MLSRISSVRIGTQVRQLANPVVNQSSQVLQTRQFYVAAALTVGSMIFGKQNKLADSIANGEVHDKTVDYEARHQEALEKRLKTLTDTRPMKPRYEGHIPLNLHEKLLLFVISGIRSYYHPENGVNIVQLGEATALPFILEDLKKTMLSDETGRRILREKPNVRTETLDMDKLSKMPKNTFGYTFYSWLKKEGVSPDTRAPVKYIDDPDHAFIFKRYRQCHDFYHSLNDLPIIIEGEIAVKALEAANMGIPMAALGTLLAPLRLKSAQRQRLYEIYLPWAIRTGLSCKPLINVYWEELLDKDVNELRKELGITPPPDLRKIRKERAALRKKFKMKYESYEKQ</sequence>
<organism>
    <name type="scientific">Vanderwaltozyma polyspora (strain ATCC 22028 / DSM 70294 / BCRC 21397 / CBS 2163 / NBRC 10782 / NRRL Y-8283 / UCD 57-17)</name>
    <name type="common">Kluyveromyces polysporus</name>
    <dbReference type="NCBI Taxonomy" id="436907"/>
    <lineage>
        <taxon>Eukaryota</taxon>
        <taxon>Fungi</taxon>
        <taxon>Dikarya</taxon>
        <taxon>Ascomycota</taxon>
        <taxon>Saccharomycotina</taxon>
        <taxon>Saccharomycetes</taxon>
        <taxon>Saccharomycetales</taxon>
        <taxon>Saccharomycetaceae</taxon>
        <taxon>Vanderwaltozyma</taxon>
    </lineage>
</organism>
<proteinExistence type="inferred from homology"/>
<keyword id="KW-0456">Lyase</keyword>
<keyword id="KW-0472">Membrane</keyword>
<keyword id="KW-0479">Metal-binding</keyword>
<keyword id="KW-0496">Mitochondrion</keyword>
<keyword id="KW-0999">Mitochondrion inner membrane</keyword>
<keyword id="KW-1185">Reference proteome</keyword>
<keyword id="KW-0809">Transit peptide</keyword>
<keyword id="KW-0831">Ubiquinone biosynthesis</keyword>
<keyword id="KW-0862">Zinc</keyword>
<gene>
    <name evidence="1" type="primary">COQ4</name>
    <name type="ORF">Kpol_1064p59</name>
</gene>
<protein>
    <recommendedName>
        <fullName evidence="1">Ubiquinone biosynthesis protein COQ4, mitochondrial</fullName>
    </recommendedName>
    <alternativeName>
        <fullName>4-hydroxy-3-methoxy-5-polyprenylbenzoate decarboxylase</fullName>
        <ecNumber evidence="1">4.1.1.130</ecNumber>
    </alternativeName>
    <alternativeName>
        <fullName evidence="1">Coenzyme Q biosynthesis protein 4</fullName>
    </alternativeName>
</protein>
<evidence type="ECO:0000255" key="1">
    <source>
        <dbReference type="HAMAP-Rule" id="MF_03111"/>
    </source>
</evidence>
<name>COQ4_VANPO</name>
<accession>A7TMI3</accession>
<reference key="1">
    <citation type="journal article" date="2007" name="Proc. Natl. Acad. Sci. U.S.A.">
        <title>Independent sorting-out of thousands of duplicated gene pairs in two yeast species descended from a whole-genome duplication.</title>
        <authorList>
            <person name="Scannell D.R."/>
            <person name="Frank A.C."/>
            <person name="Conant G.C."/>
            <person name="Byrne K.P."/>
            <person name="Woolfit M."/>
            <person name="Wolfe K.H."/>
        </authorList>
    </citation>
    <scope>NUCLEOTIDE SEQUENCE [LARGE SCALE GENOMIC DNA]</scope>
    <source>
        <strain>ATCC 22028 / DSM 70294 / BCRC 21397 / CBS 2163 / NBRC 10782 / NRRL Y-8283 / UCD 57-17</strain>
    </source>
</reference>